<dbReference type="EC" id="4.6.1.18"/>
<dbReference type="EMBL" id="AJ005771">
    <property type="protein sequence ID" value="CAB41465.1"/>
    <property type="molecule type" value="Genomic_DNA"/>
</dbReference>
<dbReference type="GlyCosmos" id="Q9WUR3">
    <property type="glycosylation" value="2 sites, No reported glycans"/>
</dbReference>
<dbReference type="GO" id="GO:0005576">
    <property type="term" value="C:extracellular region"/>
    <property type="evidence" value="ECO:0007669"/>
    <property type="project" value="UniProtKB-SubCell"/>
</dbReference>
<dbReference type="GO" id="GO:0016829">
    <property type="term" value="F:lyase activity"/>
    <property type="evidence" value="ECO:0007669"/>
    <property type="project" value="UniProtKB-KW"/>
</dbReference>
<dbReference type="GO" id="GO:0003676">
    <property type="term" value="F:nucleic acid binding"/>
    <property type="evidence" value="ECO:0007669"/>
    <property type="project" value="InterPro"/>
</dbReference>
<dbReference type="GO" id="GO:0004522">
    <property type="term" value="F:ribonuclease A activity"/>
    <property type="evidence" value="ECO:0007669"/>
    <property type="project" value="UniProtKB-EC"/>
</dbReference>
<dbReference type="GO" id="GO:0050830">
    <property type="term" value="P:defense response to Gram-positive bacterium"/>
    <property type="evidence" value="ECO:0007669"/>
    <property type="project" value="TreeGrafter"/>
</dbReference>
<dbReference type="CDD" id="cd06265">
    <property type="entry name" value="RNase_A_canonical"/>
    <property type="match status" value="1"/>
</dbReference>
<dbReference type="FunFam" id="3.10.130.10:FF:000001">
    <property type="entry name" value="Ribonuclease pancreatic"/>
    <property type="match status" value="1"/>
</dbReference>
<dbReference type="Gene3D" id="3.10.130.10">
    <property type="entry name" value="Ribonuclease A-like domain"/>
    <property type="match status" value="1"/>
</dbReference>
<dbReference type="InterPro" id="IPR001427">
    <property type="entry name" value="RNaseA"/>
</dbReference>
<dbReference type="InterPro" id="IPR036816">
    <property type="entry name" value="RNaseA-like_dom_sf"/>
</dbReference>
<dbReference type="InterPro" id="IPR023411">
    <property type="entry name" value="RNaseA_AS"/>
</dbReference>
<dbReference type="InterPro" id="IPR023412">
    <property type="entry name" value="RNaseA_domain"/>
</dbReference>
<dbReference type="PANTHER" id="PTHR11437">
    <property type="entry name" value="RIBONUCLEASE"/>
    <property type="match status" value="1"/>
</dbReference>
<dbReference type="PANTHER" id="PTHR11437:SF24">
    <property type="entry name" value="RIBONUCLEASE PANCREATIC"/>
    <property type="match status" value="1"/>
</dbReference>
<dbReference type="Pfam" id="PF00074">
    <property type="entry name" value="RnaseA"/>
    <property type="match status" value="1"/>
</dbReference>
<dbReference type="PRINTS" id="PR00794">
    <property type="entry name" value="RIBONUCLEASE"/>
</dbReference>
<dbReference type="SMART" id="SM00092">
    <property type="entry name" value="RNAse_Pc"/>
    <property type="match status" value="1"/>
</dbReference>
<dbReference type="SUPFAM" id="SSF54076">
    <property type="entry name" value="RNase A-like"/>
    <property type="match status" value="1"/>
</dbReference>
<dbReference type="PROSITE" id="PS00127">
    <property type="entry name" value="RNASE_PANCREATIC"/>
    <property type="match status" value="1"/>
</dbReference>
<name>RNAS1_ABRJE</name>
<sequence>MGLEKSFILFPLLILVLGWVQSSLGKESPAMKFERQHMDSTGSSSSSPTYCNQMMKRRNMTQGSCKPVNTFVHEPLVDVHAVCSQENVTCKNGQKNCYKSHSTLHITDCRLKGSSKYPNCQYQTSQQQKHIIVACEGNPSVPVHXDAXV</sequence>
<comment type="function">
    <text evidence="1">Endonuclease that catalyzes the cleavage of RNA on the 3' side of pyrimidine nucleotides. Acts on single-stranded and double-stranded RNA (By similarity).</text>
</comment>
<comment type="catalytic activity">
    <reaction>
        <text>an [RNA] containing cytidine + H2O = an [RNA]-3'-cytidine-3'-phosphate + a 5'-hydroxy-ribonucleotide-3'-[RNA].</text>
        <dbReference type="EC" id="4.6.1.18"/>
    </reaction>
</comment>
<comment type="catalytic activity">
    <reaction>
        <text>an [RNA] containing uridine + H2O = an [RNA]-3'-uridine-3'-phosphate + a 5'-hydroxy-ribonucleotide-3'-[RNA].</text>
        <dbReference type="EC" id="4.6.1.18"/>
    </reaction>
</comment>
<comment type="subunit">
    <text evidence="1">Monomer. Interacts with and forms tight 1:1 complexes with RNH1. Dimerization of two such complexes may occur. Interaction with RNH1 inhibits this protein (By similarity).</text>
</comment>
<comment type="subcellular location">
    <subcellularLocation>
        <location>Secreted</location>
    </subcellularLocation>
</comment>
<comment type="tissue specificity">
    <text>Pancreas.</text>
</comment>
<comment type="similarity">
    <text evidence="3">Belongs to the pancreatic ribonuclease family.</text>
</comment>
<organism>
    <name type="scientific">Abrothrix jelskii</name>
    <name type="common">Jelski's altiplano mouse</name>
    <name type="synonym">Akodon jelskii</name>
    <dbReference type="NCBI Taxonomy" id="241142"/>
    <lineage>
        <taxon>Eukaryota</taxon>
        <taxon>Metazoa</taxon>
        <taxon>Chordata</taxon>
        <taxon>Craniata</taxon>
        <taxon>Vertebrata</taxon>
        <taxon>Euteleostomi</taxon>
        <taxon>Mammalia</taxon>
        <taxon>Eutheria</taxon>
        <taxon>Euarchontoglires</taxon>
        <taxon>Glires</taxon>
        <taxon>Rodentia</taxon>
        <taxon>Myomorpha</taxon>
        <taxon>Muroidea</taxon>
        <taxon>Cricetidae</taxon>
        <taxon>Sigmodontinae</taxon>
        <taxon>Abrothrix</taxon>
    </lineage>
</organism>
<reference key="1">
    <citation type="journal article" date="1999" name="Mol. Phylogenet. Evol.">
        <title>The phylogenetic position of 'Acomyinae' (Rodentia, Mammalia) as sister group of a Murinae + Gerbillinae clade: evidence from the nuclear ribonuclease gene.</title>
        <authorList>
            <person name="Dubois J.-Y.F."/>
            <person name="Catzeflis F.M."/>
            <person name="Beintema J.J."/>
        </authorList>
    </citation>
    <scope>NUCLEOTIDE SEQUENCE [GENOMIC DNA]</scope>
</reference>
<protein>
    <recommendedName>
        <fullName>Ribonuclease pancreatic</fullName>
        <ecNumber>4.6.1.18</ecNumber>
    </recommendedName>
    <alternativeName>
        <fullName>RNase 1</fullName>
    </alternativeName>
    <alternativeName>
        <fullName>RNase A</fullName>
    </alternativeName>
</protein>
<keyword id="KW-1015">Disulfide bond</keyword>
<keyword id="KW-0255">Endonuclease</keyword>
<keyword id="KW-0325">Glycoprotein</keyword>
<keyword id="KW-0378">Hydrolase</keyword>
<keyword id="KW-0456">Lyase</keyword>
<keyword id="KW-0540">Nuclease</keyword>
<keyword id="KW-0964">Secreted</keyword>
<keyword id="KW-0732">Signal</keyword>
<proteinExistence type="evidence at transcript level"/>
<gene>
    <name type="primary">RNASE1</name>
</gene>
<feature type="signal peptide" evidence="2">
    <location>
        <begin position="1"/>
        <end position="25"/>
    </location>
</feature>
<feature type="chain" id="PRO_0000030913" description="Ribonuclease pancreatic">
    <location>
        <begin position="26"/>
        <end position="149"/>
    </location>
</feature>
<feature type="active site" description="Proton acceptor" evidence="1">
    <location>
        <position position="37"/>
    </location>
</feature>
<feature type="active site" description="Proton donor" evidence="1">
    <location>
        <position position="144"/>
    </location>
</feature>
<feature type="binding site" evidence="1">
    <location>
        <position position="32"/>
    </location>
    <ligand>
        <name>substrate</name>
    </ligand>
</feature>
<feature type="binding site" evidence="1">
    <location>
        <position position="35"/>
    </location>
    <ligand>
        <name>substrate</name>
    </ligand>
</feature>
<feature type="binding site" evidence="1">
    <location>
        <begin position="66"/>
        <end position="70"/>
    </location>
    <ligand>
        <name>substrate</name>
    </ligand>
</feature>
<feature type="binding site" evidence="1">
    <location>
        <position position="91"/>
    </location>
    <ligand>
        <name>substrate</name>
    </ligand>
</feature>
<feature type="binding site" evidence="1">
    <location>
        <position position="110"/>
    </location>
    <ligand>
        <name>substrate</name>
    </ligand>
</feature>
<feature type="glycosylation site" description="N-linked (GlcNAc...) asparagine" evidence="2">
    <location>
        <position position="59"/>
    </location>
</feature>
<feature type="glycosylation site" description="N-linked (GlcNAc...) asparagine" evidence="2">
    <location>
        <position position="87"/>
    </location>
</feature>
<feature type="disulfide bond" evidence="1">
    <location>
        <begin position="51"/>
        <end position="109"/>
    </location>
</feature>
<feature type="disulfide bond" evidence="1">
    <location>
        <begin position="65"/>
        <end position="120"/>
    </location>
</feature>
<feature type="disulfide bond" evidence="1">
    <location>
        <begin position="83"/>
        <end position="135"/>
    </location>
</feature>
<feature type="disulfide bond" evidence="1">
    <location>
        <begin position="90"/>
        <end position="97"/>
    </location>
</feature>
<accession>Q9WUR3</accession>
<evidence type="ECO:0000250" key="1"/>
<evidence type="ECO:0000255" key="2"/>
<evidence type="ECO:0000305" key="3"/>